<keyword id="KW-1064">Adaptive immunity</keyword>
<keyword id="KW-0086">Bence-Jones protein</keyword>
<keyword id="KW-0903">Direct protein sequencing</keyword>
<keyword id="KW-1015">Disulfide bond</keyword>
<keyword id="KW-0391">Immunity</keyword>
<keyword id="KW-1280">Immunoglobulin</keyword>
<keyword id="KW-1185">Reference proteome</keyword>
<evidence type="ECO:0000255" key="1">
    <source>
        <dbReference type="PROSITE-ProRule" id="PRU00114"/>
    </source>
</evidence>
<proteinExistence type="evidence at protein level"/>
<comment type="miscellaneous">
    <text>This is a Bence-Jones protein.</text>
</comment>
<reference key="1">
    <citation type="journal article" date="1967" name="Science">
        <title>Mechanism of antibody synthesis: size differences between mouse kappa chains.</title>
        <authorList>
            <person name="Gray W.R."/>
            <person name="Dreyer W.J."/>
            <person name="Hood L.E."/>
        </authorList>
    </citation>
    <scope>PROTEIN SEQUENCE</scope>
</reference>
<name>KV3A3_MOUSE</name>
<feature type="chain" id="PRO_0000059779" description="Ig kappa chain V-III region MOPC 70">
    <location>
        <begin position="1"/>
        <end position="111" status="greater than"/>
    </location>
</feature>
<feature type="region of interest" description="Framework-1">
    <location>
        <begin position="1"/>
        <end position="23"/>
    </location>
</feature>
<feature type="region of interest" description="Complementarity-determining-1">
    <location>
        <begin position="24"/>
        <end position="38"/>
    </location>
</feature>
<feature type="region of interest" description="Framework-2">
    <location>
        <begin position="39"/>
        <end position="53"/>
    </location>
</feature>
<feature type="region of interest" description="Complementarity-determining-2">
    <location>
        <begin position="54"/>
        <end position="60"/>
    </location>
</feature>
<feature type="region of interest" description="Framework-3">
    <location>
        <begin position="61"/>
        <end position="92"/>
    </location>
</feature>
<feature type="region of interest" description="Complementarity-determining-3">
    <location>
        <begin position="93"/>
        <end position="101"/>
    </location>
</feature>
<feature type="region of interest" description="Framework-4">
    <location>
        <begin position="102"/>
        <end position="111"/>
    </location>
</feature>
<feature type="disulfide bond" evidence="1">
    <location>
        <begin position="23"/>
        <end position="92"/>
    </location>
</feature>
<feature type="non-terminal residue">
    <location>
        <position position="111"/>
    </location>
</feature>
<protein>
    <recommendedName>
        <fullName>Ig kappa chain V-III region MOPC 70</fullName>
    </recommendedName>
</protein>
<accession>P01656</accession>
<organism>
    <name type="scientific">Mus musculus</name>
    <name type="common">Mouse</name>
    <dbReference type="NCBI Taxonomy" id="10090"/>
    <lineage>
        <taxon>Eukaryota</taxon>
        <taxon>Metazoa</taxon>
        <taxon>Chordata</taxon>
        <taxon>Craniata</taxon>
        <taxon>Vertebrata</taxon>
        <taxon>Euteleostomi</taxon>
        <taxon>Mammalia</taxon>
        <taxon>Eutheria</taxon>
        <taxon>Euarchontoglires</taxon>
        <taxon>Glires</taxon>
        <taxon>Rodentia</taxon>
        <taxon>Myomorpha</taxon>
        <taxon>Muroidea</taxon>
        <taxon>Muridae</taxon>
        <taxon>Murinae</taxon>
        <taxon>Mus</taxon>
        <taxon>Mus</taxon>
    </lineage>
</organism>
<dbReference type="PIR" id="PH0093">
    <property type="entry name" value="PH0093"/>
</dbReference>
<dbReference type="PIR" id="PH1079">
    <property type="entry name" value="PH1079"/>
</dbReference>
<dbReference type="SMR" id="P01656"/>
<dbReference type="FunCoup" id="P01656">
    <property type="interactions" value="755"/>
</dbReference>
<dbReference type="jPOST" id="P01656"/>
<dbReference type="InParanoid" id="P01656"/>
<dbReference type="Proteomes" id="UP000000589">
    <property type="component" value="Unplaced"/>
</dbReference>
<dbReference type="RNAct" id="P01656">
    <property type="molecule type" value="protein"/>
</dbReference>
<dbReference type="GO" id="GO:0019814">
    <property type="term" value="C:immunoglobulin complex"/>
    <property type="evidence" value="ECO:0000318"/>
    <property type="project" value="GO_Central"/>
</dbReference>
<dbReference type="GO" id="GO:0002250">
    <property type="term" value="P:adaptive immune response"/>
    <property type="evidence" value="ECO:0007669"/>
    <property type="project" value="UniProtKB-KW"/>
</dbReference>
<dbReference type="GO" id="GO:0006955">
    <property type="term" value="P:immune response"/>
    <property type="evidence" value="ECO:0000318"/>
    <property type="project" value="GO_Central"/>
</dbReference>
<dbReference type="CDD" id="cd04980">
    <property type="entry name" value="IgV_L_kappa"/>
    <property type="match status" value="1"/>
</dbReference>
<dbReference type="FunFam" id="2.60.40.10:FF:000350">
    <property type="entry name" value="Immunoglobulin kappa chain variable 18-36"/>
    <property type="match status" value="1"/>
</dbReference>
<dbReference type="Gene3D" id="2.60.40.10">
    <property type="entry name" value="Immunoglobulins"/>
    <property type="match status" value="1"/>
</dbReference>
<dbReference type="InterPro" id="IPR007110">
    <property type="entry name" value="Ig-like_dom"/>
</dbReference>
<dbReference type="InterPro" id="IPR036179">
    <property type="entry name" value="Ig-like_dom_sf"/>
</dbReference>
<dbReference type="InterPro" id="IPR013783">
    <property type="entry name" value="Ig-like_fold"/>
</dbReference>
<dbReference type="InterPro" id="IPR003599">
    <property type="entry name" value="Ig_sub"/>
</dbReference>
<dbReference type="InterPro" id="IPR013106">
    <property type="entry name" value="Ig_V-set"/>
</dbReference>
<dbReference type="InterPro" id="IPR050150">
    <property type="entry name" value="IgV_Light_Chain"/>
</dbReference>
<dbReference type="PANTHER" id="PTHR23267">
    <property type="entry name" value="IMMUNOGLOBULIN LIGHT CHAIN"/>
    <property type="match status" value="1"/>
</dbReference>
<dbReference type="Pfam" id="PF07686">
    <property type="entry name" value="V-set"/>
    <property type="match status" value="1"/>
</dbReference>
<dbReference type="SMART" id="SM00409">
    <property type="entry name" value="IG"/>
    <property type="match status" value="1"/>
</dbReference>
<dbReference type="SMART" id="SM00406">
    <property type="entry name" value="IGv"/>
    <property type="match status" value="1"/>
</dbReference>
<dbReference type="SUPFAM" id="SSF48726">
    <property type="entry name" value="Immunoglobulin"/>
    <property type="match status" value="1"/>
</dbReference>
<dbReference type="PROSITE" id="PS50835">
    <property type="entry name" value="IG_LIKE"/>
    <property type="match status" value="1"/>
</dbReference>
<sequence>DIVLTQSPASLAVSLGQRATISCRASESVDNSGISFMNWFQQKPGQPPKLLIYAASNQGSGVPARFSGSGSGTDFSLNIHPMEEDDTAMYFCQQSKEVPWTFGGGTKLEIK</sequence>